<protein>
    <recommendedName>
        <fullName evidence="1">Argininosuccinate synthase</fullName>
        <ecNumber evidence="1">6.3.4.5</ecNumber>
    </recommendedName>
    <alternativeName>
        <fullName evidence="1">Citrulline--aspartate ligase</fullName>
    </alternativeName>
</protein>
<name>ASSY_SHEB8</name>
<reference key="1">
    <citation type="submission" date="2007-07" db="EMBL/GenBank/DDBJ databases">
        <title>Complete sequence of chromosome of Shewanella baltica OS185.</title>
        <authorList>
            <consortium name="US DOE Joint Genome Institute"/>
            <person name="Copeland A."/>
            <person name="Lucas S."/>
            <person name="Lapidus A."/>
            <person name="Barry K."/>
            <person name="Glavina del Rio T."/>
            <person name="Dalin E."/>
            <person name="Tice H."/>
            <person name="Pitluck S."/>
            <person name="Sims D."/>
            <person name="Brettin T."/>
            <person name="Bruce D."/>
            <person name="Detter J.C."/>
            <person name="Han C."/>
            <person name="Schmutz J."/>
            <person name="Larimer F."/>
            <person name="Land M."/>
            <person name="Hauser L."/>
            <person name="Kyrpides N."/>
            <person name="Mikhailova N."/>
            <person name="Brettar I."/>
            <person name="Rodrigues J."/>
            <person name="Konstantinidis K."/>
            <person name="Tiedje J."/>
            <person name="Richardson P."/>
        </authorList>
    </citation>
    <scope>NUCLEOTIDE SEQUENCE [LARGE SCALE GENOMIC DNA]</scope>
    <source>
        <strain>OS185</strain>
    </source>
</reference>
<gene>
    <name evidence="1" type="primary">argG</name>
    <name type="ordered locus">Shew185_4092</name>
</gene>
<sequence length="412" mass="45079">MSIEIKNTGVKKVVLAYSGGLDTSAIIPWLKENYDNCEIIAFCADVGQGEEELVGLTEKALASGASECHIVDLKEEFVKEYIYPTIASGAIYEGTYLLGTSMARPIIAKAQVEVARKVGADALCHGCTGKGNDQVRFEGCFAALAPDLKVIAPWREWTMQSREDLLAYLAERDIKTSASATKIYSRDANAFHISHEGGELEDPWNEPSKGVWTLTADPEDAPNKPEYVSLEVEHGRITKVNGEALTPYAALMTLNAIAAPHGVGRIDITENRLVGMKSRGCYETPGGTVMFAALRAIEELVLDKTSRNWREQVAAQMAHLVYDGRWFTPLCKSLLAASESLAESVNGEVVVKLYKGQATAVKKRSPNSLYSEAFATFGEDQVYDQKHAEGFIRLYSLASRIRALNANDVKSK</sequence>
<evidence type="ECO:0000255" key="1">
    <source>
        <dbReference type="HAMAP-Rule" id="MF_00005"/>
    </source>
</evidence>
<comment type="catalytic activity">
    <reaction evidence="1">
        <text>L-citrulline + L-aspartate + ATP = 2-(N(omega)-L-arginino)succinate + AMP + diphosphate + H(+)</text>
        <dbReference type="Rhea" id="RHEA:10932"/>
        <dbReference type="ChEBI" id="CHEBI:15378"/>
        <dbReference type="ChEBI" id="CHEBI:29991"/>
        <dbReference type="ChEBI" id="CHEBI:30616"/>
        <dbReference type="ChEBI" id="CHEBI:33019"/>
        <dbReference type="ChEBI" id="CHEBI:57472"/>
        <dbReference type="ChEBI" id="CHEBI:57743"/>
        <dbReference type="ChEBI" id="CHEBI:456215"/>
        <dbReference type="EC" id="6.3.4.5"/>
    </reaction>
</comment>
<comment type="pathway">
    <text evidence="1">Amino-acid biosynthesis; L-arginine biosynthesis; L-arginine from L-ornithine and carbamoyl phosphate: step 2/3.</text>
</comment>
<comment type="subunit">
    <text evidence="1">Homotetramer.</text>
</comment>
<comment type="subcellular location">
    <subcellularLocation>
        <location evidence="1">Cytoplasm</location>
    </subcellularLocation>
</comment>
<comment type="similarity">
    <text evidence="1">Belongs to the argininosuccinate synthase family. Type 1 subfamily.</text>
</comment>
<accession>A6WTS0</accession>
<feature type="chain" id="PRO_1000000432" description="Argininosuccinate synthase">
    <location>
        <begin position="1"/>
        <end position="412"/>
    </location>
</feature>
<feature type="binding site" evidence="1">
    <location>
        <begin position="16"/>
        <end position="24"/>
    </location>
    <ligand>
        <name>ATP</name>
        <dbReference type="ChEBI" id="CHEBI:30616"/>
    </ligand>
</feature>
<feature type="binding site" evidence="1">
    <location>
        <position position="44"/>
    </location>
    <ligand>
        <name>ATP</name>
        <dbReference type="ChEBI" id="CHEBI:30616"/>
    </ligand>
</feature>
<feature type="binding site" evidence="1">
    <location>
        <position position="96"/>
    </location>
    <ligand>
        <name>L-citrulline</name>
        <dbReference type="ChEBI" id="CHEBI:57743"/>
    </ligand>
</feature>
<feature type="binding site" evidence="1">
    <location>
        <position position="101"/>
    </location>
    <ligand>
        <name>L-citrulline</name>
        <dbReference type="ChEBI" id="CHEBI:57743"/>
    </ligand>
</feature>
<feature type="binding site" evidence="1">
    <location>
        <position position="126"/>
    </location>
    <ligand>
        <name>ATP</name>
        <dbReference type="ChEBI" id="CHEBI:30616"/>
    </ligand>
</feature>
<feature type="binding site" evidence="1">
    <location>
        <position position="128"/>
    </location>
    <ligand>
        <name>L-aspartate</name>
        <dbReference type="ChEBI" id="CHEBI:29991"/>
    </ligand>
</feature>
<feature type="binding site" evidence="1">
    <location>
        <position position="132"/>
    </location>
    <ligand>
        <name>L-aspartate</name>
        <dbReference type="ChEBI" id="CHEBI:29991"/>
    </ligand>
</feature>
<feature type="binding site" evidence="1">
    <location>
        <position position="132"/>
    </location>
    <ligand>
        <name>L-citrulline</name>
        <dbReference type="ChEBI" id="CHEBI:57743"/>
    </ligand>
</feature>
<feature type="binding site" evidence="1">
    <location>
        <position position="133"/>
    </location>
    <ligand>
        <name>L-aspartate</name>
        <dbReference type="ChEBI" id="CHEBI:29991"/>
    </ligand>
</feature>
<feature type="binding site" evidence="1">
    <location>
        <position position="136"/>
    </location>
    <ligand>
        <name>L-citrulline</name>
        <dbReference type="ChEBI" id="CHEBI:57743"/>
    </ligand>
</feature>
<feature type="binding site" evidence="1">
    <location>
        <position position="185"/>
    </location>
    <ligand>
        <name>L-citrulline</name>
        <dbReference type="ChEBI" id="CHEBI:57743"/>
    </ligand>
</feature>
<feature type="binding site" evidence="1">
    <location>
        <position position="194"/>
    </location>
    <ligand>
        <name>L-citrulline</name>
        <dbReference type="ChEBI" id="CHEBI:57743"/>
    </ligand>
</feature>
<feature type="binding site" evidence="1">
    <location>
        <position position="270"/>
    </location>
    <ligand>
        <name>L-citrulline</name>
        <dbReference type="ChEBI" id="CHEBI:57743"/>
    </ligand>
</feature>
<feature type="binding site" evidence="1">
    <location>
        <position position="282"/>
    </location>
    <ligand>
        <name>L-citrulline</name>
        <dbReference type="ChEBI" id="CHEBI:57743"/>
    </ligand>
</feature>
<proteinExistence type="inferred from homology"/>
<keyword id="KW-0028">Amino-acid biosynthesis</keyword>
<keyword id="KW-0055">Arginine biosynthesis</keyword>
<keyword id="KW-0067">ATP-binding</keyword>
<keyword id="KW-0963">Cytoplasm</keyword>
<keyword id="KW-0436">Ligase</keyword>
<keyword id="KW-0547">Nucleotide-binding</keyword>
<dbReference type="EC" id="6.3.4.5" evidence="1"/>
<dbReference type="EMBL" id="CP000753">
    <property type="protein sequence ID" value="ABS10209.1"/>
    <property type="molecule type" value="Genomic_DNA"/>
</dbReference>
<dbReference type="RefSeq" id="WP_006083550.1">
    <property type="nucleotide sequence ID" value="NC_009665.1"/>
</dbReference>
<dbReference type="SMR" id="A6WTS0"/>
<dbReference type="KEGG" id="sbm:Shew185_4092"/>
<dbReference type="HOGENOM" id="CLU_032784_4_2_6"/>
<dbReference type="UniPathway" id="UPA00068">
    <property type="reaction ID" value="UER00113"/>
</dbReference>
<dbReference type="GO" id="GO:0005737">
    <property type="term" value="C:cytoplasm"/>
    <property type="evidence" value="ECO:0007669"/>
    <property type="project" value="UniProtKB-SubCell"/>
</dbReference>
<dbReference type="GO" id="GO:0004055">
    <property type="term" value="F:argininosuccinate synthase activity"/>
    <property type="evidence" value="ECO:0007669"/>
    <property type="project" value="UniProtKB-UniRule"/>
</dbReference>
<dbReference type="GO" id="GO:0005524">
    <property type="term" value="F:ATP binding"/>
    <property type="evidence" value="ECO:0007669"/>
    <property type="project" value="UniProtKB-UniRule"/>
</dbReference>
<dbReference type="GO" id="GO:0000053">
    <property type="term" value="P:argininosuccinate metabolic process"/>
    <property type="evidence" value="ECO:0007669"/>
    <property type="project" value="TreeGrafter"/>
</dbReference>
<dbReference type="GO" id="GO:0006526">
    <property type="term" value="P:L-arginine biosynthetic process"/>
    <property type="evidence" value="ECO:0007669"/>
    <property type="project" value="UniProtKB-UniRule"/>
</dbReference>
<dbReference type="GO" id="GO:0000050">
    <property type="term" value="P:urea cycle"/>
    <property type="evidence" value="ECO:0007669"/>
    <property type="project" value="TreeGrafter"/>
</dbReference>
<dbReference type="CDD" id="cd01999">
    <property type="entry name" value="ASS"/>
    <property type="match status" value="1"/>
</dbReference>
<dbReference type="FunFam" id="1.20.5.470:FF:000005">
    <property type="entry name" value="Argininosuccinate synthase"/>
    <property type="match status" value="1"/>
</dbReference>
<dbReference type="FunFam" id="3.40.50.620:FF:000019">
    <property type="entry name" value="Argininosuccinate synthase"/>
    <property type="match status" value="1"/>
</dbReference>
<dbReference type="FunFam" id="3.90.1260.10:FF:000007">
    <property type="entry name" value="Argininosuccinate synthase"/>
    <property type="match status" value="1"/>
</dbReference>
<dbReference type="Gene3D" id="3.90.1260.10">
    <property type="entry name" value="Argininosuccinate synthetase, chain A, domain 2"/>
    <property type="match status" value="1"/>
</dbReference>
<dbReference type="Gene3D" id="3.40.50.620">
    <property type="entry name" value="HUPs"/>
    <property type="match status" value="1"/>
</dbReference>
<dbReference type="Gene3D" id="1.20.5.470">
    <property type="entry name" value="Single helix bin"/>
    <property type="match status" value="1"/>
</dbReference>
<dbReference type="HAMAP" id="MF_00005">
    <property type="entry name" value="Arg_succ_synth_type1"/>
    <property type="match status" value="1"/>
</dbReference>
<dbReference type="InterPro" id="IPR048268">
    <property type="entry name" value="Arginosuc_syn_C"/>
</dbReference>
<dbReference type="InterPro" id="IPR048267">
    <property type="entry name" value="Arginosuc_syn_N"/>
</dbReference>
<dbReference type="InterPro" id="IPR001518">
    <property type="entry name" value="Arginosuc_synth"/>
</dbReference>
<dbReference type="InterPro" id="IPR018223">
    <property type="entry name" value="Arginosuc_synth_CS"/>
</dbReference>
<dbReference type="InterPro" id="IPR023434">
    <property type="entry name" value="Arginosuc_synth_type_1_subfam"/>
</dbReference>
<dbReference type="InterPro" id="IPR024074">
    <property type="entry name" value="AS_cat/multimer_dom_body"/>
</dbReference>
<dbReference type="InterPro" id="IPR014729">
    <property type="entry name" value="Rossmann-like_a/b/a_fold"/>
</dbReference>
<dbReference type="NCBIfam" id="TIGR00032">
    <property type="entry name" value="argG"/>
    <property type="match status" value="1"/>
</dbReference>
<dbReference type="NCBIfam" id="NF001770">
    <property type="entry name" value="PRK00509.1"/>
    <property type="match status" value="1"/>
</dbReference>
<dbReference type="PANTHER" id="PTHR11587">
    <property type="entry name" value="ARGININOSUCCINATE SYNTHASE"/>
    <property type="match status" value="1"/>
</dbReference>
<dbReference type="PANTHER" id="PTHR11587:SF2">
    <property type="entry name" value="ARGININOSUCCINATE SYNTHASE"/>
    <property type="match status" value="1"/>
</dbReference>
<dbReference type="Pfam" id="PF20979">
    <property type="entry name" value="Arginosuc_syn_C"/>
    <property type="match status" value="1"/>
</dbReference>
<dbReference type="Pfam" id="PF00764">
    <property type="entry name" value="Arginosuc_synth"/>
    <property type="match status" value="1"/>
</dbReference>
<dbReference type="SUPFAM" id="SSF52402">
    <property type="entry name" value="Adenine nucleotide alpha hydrolases-like"/>
    <property type="match status" value="1"/>
</dbReference>
<dbReference type="SUPFAM" id="SSF69864">
    <property type="entry name" value="Argininosuccinate synthetase, C-terminal domain"/>
    <property type="match status" value="1"/>
</dbReference>
<dbReference type="PROSITE" id="PS00564">
    <property type="entry name" value="ARGININOSUCCIN_SYN_1"/>
    <property type="match status" value="1"/>
</dbReference>
<dbReference type="PROSITE" id="PS00565">
    <property type="entry name" value="ARGININOSUCCIN_SYN_2"/>
    <property type="match status" value="1"/>
</dbReference>
<organism>
    <name type="scientific">Shewanella baltica (strain OS185)</name>
    <dbReference type="NCBI Taxonomy" id="402882"/>
    <lineage>
        <taxon>Bacteria</taxon>
        <taxon>Pseudomonadati</taxon>
        <taxon>Pseudomonadota</taxon>
        <taxon>Gammaproteobacteria</taxon>
        <taxon>Alteromonadales</taxon>
        <taxon>Shewanellaceae</taxon>
        <taxon>Shewanella</taxon>
    </lineage>
</organism>